<dbReference type="EC" id="6.5.1.2" evidence="1"/>
<dbReference type="EMBL" id="CP000908">
    <property type="protein sequence ID" value="ABY33010.1"/>
    <property type="molecule type" value="Genomic_DNA"/>
</dbReference>
<dbReference type="RefSeq" id="WP_012255700.1">
    <property type="nucleotide sequence ID" value="NC_010172.1"/>
</dbReference>
<dbReference type="SMR" id="A9VWA4"/>
<dbReference type="KEGG" id="mex:Mext_4642"/>
<dbReference type="eggNOG" id="COG0272">
    <property type="taxonomic scope" value="Bacteria"/>
</dbReference>
<dbReference type="HOGENOM" id="CLU_007764_2_1_5"/>
<dbReference type="BioCyc" id="MEXT419610:MEXT_RS23320-MONOMER"/>
<dbReference type="GO" id="GO:0005829">
    <property type="term" value="C:cytosol"/>
    <property type="evidence" value="ECO:0007669"/>
    <property type="project" value="TreeGrafter"/>
</dbReference>
<dbReference type="GO" id="GO:0003911">
    <property type="term" value="F:DNA ligase (NAD+) activity"/>
    <property type="evidence" value="ECO:0007669"/>
    <property type="project" value="UniProtKB-UniRule"/>
</dbReference>
<dbReference type="GO" id="GO:0046872">
    <property type="term" value="F:metal ion binding"/>
    <property type="evidence" value="ECO:0007669"/>
    <property type="project" value="UniProtKB-KW"/>
</dbReference>
<dbReference type="GO" id="GO:0006281">
    <property type="term" value="P:DNA repair"/>
    <property type="evidence" value="ECO:0007669"/>
    <property type="project" value="UniProtKB-KW"/>
</dbReference>
<dbReference type="GO" id="GO:0006260">
    <property type="term" value="P:DNA replication"/>
    <property type="evidence" value="ECO:0007669"/>
    <property type="project" value="UniProtKB-KW"/>
</dbReference>
<dbReference type="CDD" id="cd17748">
    <property type="entry name" value="BRCT_DNA_ligase_like"/>
    <property type="match status" value="1"/>
</dbReference>
<dbReference type="CDD" id="cd00114">
    <property type="entry name" value="LIGANc"/>
    <property type="match status" value="1"/>
</dbReference>
<dbReference type="FunFam" id="3.30.470.30:FF:000001">
    <property type="entry name" value="DNA ligase"/>
    <property type="match status" value="1"/>
</dbReference>
<dbReference type="Gene3D" id="6.20.10.30">
    <property type="match status" value="1"/>
</dbReference>
<dbReference type="Gene3D" id="1.10.150.20">
    <property type="entry name" value="5' to 3' exonuclease, C-terminal subdomain"/>
    <property type="match status" value="2"/>
</dbReference>
<dbReference type="Gene3D" id="3.40.50.10190">
    <property type="entry name" value="BRCT domain"/>
    <property type="match status" value="1"/>
</dbReference>
<dbReference type="Gene3D" id="3.30.470.30">
    <property type="entry name" value="DNA ligase/mRNA capping enzyme"/>
    <property type="match status" value="1"/>
</dbReference>
<dbReference type="Gene3D" id="1.10.287.610">
    <property type="entry name" value="Helix hairpin bin"/>
    <property type="match status" value="1"/>
</dbReference>
<dbReference type="Gene3D" id="2.40.50.140">
    <property type="entry name" value="Nucleic acid-binding proteins"/>
    <property type="match status" value="1"/>
</dbReference>
<dbReference type="HAMAP" id="MF_01588">
    <property type="entry name" value="DNA_ligase_A"/>
    <property type="match status" value="1"/>
</dbReference>
<dbReference type="InterPro" id="IPR001357">
    <property type="entry name" value="BRCT_dom"/>
</dbReference>
<dbReference type="InterPro" id="IPR036420">
    <property type="entry name" value="BRCT_dom_sf"/>
</dbReference>
<dbReference type="InterPro" id="IPR041663">
    <property type="entry name" value="DisA/LigA_HHH"/>
</dbReference>
<dbReference type="InterPro" id="IPR001679">
    <property type="entry name" value="DNA_ligase"/>
</dbReference>
<dbReference type="InterPro" id="IPR018239">
    <property type="entry name" value="DNA_ligase_AS"/>
</dbReference>
<dbReference type="InterPro" id="IPR033136">
    <property type="entry name" value="DNA_ligase_CS"/>
</dbReference>
<dbReference type="InterPro" id="IPR013839">
    <property type="entry name" value="DNAligase_adenylation"/>
</dbReference>
<dbReference type="InterPro" id="IPR013840">
    <property type="entry name" value="DNAligase_N"/>
</dbReference>
<dbReference type="InterPro" id="IPR012340">
    <property type="entry name" value="NA-bd_OB-fold"/>
</dbReference>
<dbReference type="InterPro" id="IPR004150">
    <property type="entry name" value="NAD_DNA_ligase_OB"/>
</dbReference>
<dbReference type="InterPro" id="IPR010994">
    <property type="entry name" value="RuvA_2-like"/>
</dbReference>
<dbReference type="InterPro" id="IPR004149">
    <property type="entry name" value="Znf_DNAligase_C4"/>
</dbReference>
<dbReference type="NCBIfam" id="TIGR00575">
    <property type="entry name" value="dnlj"/>
    <property type="match status" value="1"/>
</dbReference>
<dbReference type="NCBIfam" id="NF005932">
    <property type="entry name" value="PRK07956.1"/>
    <property type="match status" value="1"/>
</dbReference>
<dbReference type="PANTHER" id="PTHR23389">
    <property type="entry name" value="CHROMOSOME TRANSMISSION FIDELITY FACTOR 18"/>
    <property type="match status" value="1"/>
</dbReference>
<dbReference type="PANTHER" id="PTHR23389:SF9">
    <property type="entry name" value="DNA LIGASE"/>
    <property type="match status" value="1"/>
</dbReference>
<dbReference type="Pfam" id="PF00533">
    <property type="entry name" value="BRCT"/>
    <property type="match status" value="1"/>
</dbReference>
<dbReference type="Pfam" id="PF01653">
    <property type="entry name" value="DNA_ligase_aden"/>
    <property type="match status" value="1"/>
</dbReference>
<dbReference type="Pfam" id="PF03120">
    <property type="entry name" value="DNA_ligase_OB"/>
    <property type="match status" value="1"/>
</dbReference>
<dbReference type="Pfam" id="PF03119">
    <property type="entry name" value="DNA_ligase_ZBD"/>
    <property type="match status" value="1"/>
</dbReference>
<dbReference type="Pfam" id="PF12826">
    <property type="entry name" value="HHH_2"/>
    <property type="match status" value="1"/>
</dbReference>
<dbReference type="PIRSF" id="PIRSF001604">
    <property type="entry name" value="LigA"/>
    <property type="match status" value="1"/>
</dbReference>
<dbReference type="SMART" id="SM00292">
    <property type="entry name" value="BRCT"/>
    <property type="match status" value="1"/>
</dbReference>
<dbReference type="SMART" id="SM00532">
    <property type="entry name" value="LIGANc"/>
    <property type="match status" value="1"/>
</dbReference>
<dbReference type="SUPFAM" id="SSF52113">
    <property type="entry name" value="BRCT domain"/>
    <property type="match status" value="1"/>
</dbReference>
<dbReference type="SUPFAM" id="SSF56091">
    <property type="entry name" value="DNA ligase/mRNA capping enzyme, catalytic domain"/>
    <property type="match status" value="1"/>
</dbReference>
<dbReference type="SUPFAM" id="SSF50249">
    <property type="entry name" value="Nucleic acid-binding proteins"/>
    <property type="match status" value="1"/>
</dbReference>
<dbReference type="SUPFAM" id="SSF47781">
    <property type="entry name" value="RuvA domain 2-like"/>
    <property type="match status" value="1"/>
</dbReference>
<dbReference type="PROSITE" id="PS50172">
    <property type="entry name" value="BRCT"/>
    <property type="match status" value="1"/>
</dbReference>
<dbReference type="PROSITE" id="PS01055">
    <property type="entry name" value="DNA_LIGASE_N1"/>
    <property type="match status" value="1"/>
</dbReference>
<dbReference type="PROSITE" id="PS01056">
    <property type="entry name" value="DNA_LIGASE_N2"/>
    <property type="match status" value="1"/>
</dbReference>
<name>DNLJ_METEP</name>
<protein>
    <recommendedName>
        <fullName evidence="1">DNA ligase</fullName>
        <ecNumber evidence="1">6.5.1.2</ecNumber>
    </recommendedName>
    <alternativeName>
        <fullName evidence="1">Polydeoxyribonucleotide synthase [NAD(+)]</fullName>
    </alternativeName>
</protein>
<feature type="chain" id="PRO_0000380415" description="DNA ligase">
    <location>
        <begin position="1"/>
        <end position="814"/>
    </location>
</feature>
<feature type="domain" description="BRCT" evidence="1">
    <location>
        <begin position="735"/>
        <end position="814"/>
    </location>
</feature>
<feature type="region of interest" description="Disordered" evidence="2">
    <location>
        <begin position="525"/>
        <end position="548"/>
    </location>
</feature>
<feature type="active site" description="N6-AMP-lysine intermediate" evidence="1">
    <location>
        <position position="131"/>
    </location>
</feature>
<feature type="binding site" evidence="1">
    <location>
        <begin position="46"/>
        <end position="50"/>
    </location>
    <ligand>
        <name>NAD(+)</name>
        <dbReference type="ChEBI" id="CHEBI:57540"/>
    </ligand>
</feature>
<feature type="binding site" evidence="1">
    <location>
        <begin position="95"/>
        <end position="96"/>
    </location>
    <ligand>
        <name>NAD(+)</name>
        <dbReference type="ChEBI" id="CHEBI:57540"/>
    </ligand>
</feature>
<feature type="binding site" evidence="1">
    <location>
        <position position="129"/>
    </location>
    <ligand>
        <name>NAD(+)</name>
        <dbReference type="ChEBI" id="CHEBI:57540"/>
    </ligand>
</feature>
<feature type="binding site" evidence="1">
    <location>
        <position position="152"/>
    </location>
    <ligand>
        <name>NAD(+)</name>
        <dbReference type="ChEBI" id="CHEBI:57540"/>
    </ligand>
</feature>
<feature type="binding site" evidence="1">
    <location>
        <position position="189"/>
    </location>
    <ligand>
        <name>NAD(+)</name>
        <dbReference type="ChEBI" id="CHEBI:57540"/>
    </ligand>
</feature>
<feature type="binding site" evidence="1">
    <location>
        <position position="305"/>
    </location>
    <ligand>
        <name>NAD(+)</name>
        <dbReference type="ChEBI" id="CHEBI:57540"/>
    </ligand>
</feature>
<feature type="binding site" evidence="1">
    <location>
        <position position="329"/>
    </location>
    <ligand>
        <name>NAD(+)</name>
        <dbReference type="ChEBI" id="CHEBI:57540"/>
    </ligand>
</feature>
<feature type="binding site" evidence="1">
    <location>
        <position position="434"/>
    </location>
    <ligand>
        <name>Zn(2+)</name>
        <dbReference type="ChEBI" id="CHEBI:29105"/>
    </ligand>
</feature>
<feature type="binding site" evidence="1">
    <location>
        <position position="437"/>
    </location>
    <ligand>
        <name>Zn(2+)</name>
        <dbReference type="ChEBI" id="CHEBI:29105"/>
    </ligand>
</feature>
<feature type="binding site" evidence="1">
    <location>
        <position position="458"/>
    </location>
    <ligand>
        <name>Zn(2+)</name>
        <dbReference type="ChEBI" id="CHEBI:29105"/>
    </ligand>
</feature>
<feature type="binding site" evidence="1">
    <location>
        <position position="464"/>
    </location>
    <ligand>
        <name>Zn(2+)</name>
        <dbReference type="ChEBI" id="CHEBI:29105"/>
    </ligand>
</feature>
<keyword id="KW-0227">DNA damage</keyword>
<keyword id="KW-0234">DNA repair</keyword>
<keyword id="KW-0235">DNA replication</keyword>
<keyword id="KW-0436">Ligase</keyword>
<keyword id="KW-0460">Magnesium</keyword>
<keyword id="KW-0464">Manganese</keyword>
<keyword id="KW-0479">Metal-binding</keyword>
<keyword id="KW-0520">NAD</keyword>
<keyword id="KW-0862">Zinc</keyword>
<organism>
    <name type="scientific">Methylorubrum extorquens (strain PA1)</name>
    <name type="common">Methylobacterium extorquens</name>
    <dbReference type="NCBI Taxonomy" id="419610"/>
    <lineage>
        <taxon>Bacteria</taxon>
        <taxon>Pseudomonadati</taxon>
        <taxon>Pseudomonadota</taxon>
        <taxon>Alphaproteobacteria</taxon>
        <taxon>Hyphomicrobiales</taxon>
        <taxon>Methylobacteriaceae</taxon>
        <taxon>Methylorubrum</taxon>
    </lineage>
</organism>
<sequence length="814" mass="87940">MPSTPLSAAVEALSEDAAQARHAELSRAIERANQLYYNEDAPELTDAEYDALRQELEAIEARFPALTGTTEASAGVGAKPSEKFAKVRHAVPMLSLGNAFADEDVDEFVARVRRFLNLPAEESVAFTAEPKIDGLSLSLRYEAGRLVTAATRGDGEVGENVTANALTVDDIPETLSGENIPEVLEVRGEVYLSHEDFAAINARQEAAGKPLFANPRNAAAGSLRQLDPAITASRPLRFFAYAWGEVSEPFTDTQSAVLERFRGWGLPVNPRTKLCRSAEEMIAHYRTIEAERAGLGYDIDGVVYKVDDLGFQRRLGFVSRAPRWALAHKFAAQEAITELLAIDINVGRTGSLNPLARLKPVTVGGVVVSNATLHNEGYVQGVGADGEPIREGRDIRVGDTVIVVRAGDVIPKVRDVVIEKRPADAVPYVFPDTCPACGSRAVRELNPRTKKLDAIRRCTGGLICPAQGVERLKHFVSRNGFDLEGFGQTYIEVLFEAGLVKQPADLFRLEFEPLKAAIVARRETLSAQRRSEGEPAPKKPTKKKGEEEDKAIKNLLASLDARRTIPLNRFLFALGIPQIGESTAKALAKRFPDMPSLMAALEAATREQAGRDWLELSALPRIGPGTRDRLFETLDPLPGEAMQDLSLGARLRGRLTPSQREAVLAHYGSEEKVDAALERAASQRPGDAYRLFADDGEIGPVATDSLIQFFSEPHNDAAVRALLEEVGTEPLATTTSAAAFAGKTVVFTGSLEKMTRSEAKATAERLGAKVSGSVSAKTDLVVAGPGAGSKLKDAEKHGVKVVSEDDWLAMLAEA</sequence>
<evidence type="ECO:0000255" key="1">
    <source>
        <dbReference type="HAMAP-Rule" id="MF_01588"/>
    </source>
</evidence>
<evidence type="ECO:0000256" key="2">
    <source>
        <dbReference type="SAM" id="MobiDB-lite"/>
    </source>
</evidence>
<reference key="1">
    <citation type="submission" date="2007-12" db="EMBL/GenBank/DDBJ databases">
        <title>Complete sequence of Methylobacterium extorquens PA1.</title>
        <authorList>
            <consortium name="US DOE Joint Genome Institute"/>
            <person name="Copeland A."/>
            <person name="Lucas S."/>
            <person name="Lapidus A."/>
            <person name="Barry K."/>
            <person name="Glavina del Rio T."/>
            <person name="Dalin E."/>
            <person name="Tice H."/>
            <person name="Pitluck S."/>
            <person name="Saunders E."/>
            <person name="Brettin T."/>
            <person name="Bruce D."/>
            <person name="Detter J.C."/>
            <person name="Han C."/>
            <person name="Schmutz J."/>
            <person name="Larimer F."/>
            <person name="Land M."/>
            <person name="Hauser L."/>
            <person name="Kyrpides N."/>
            <person name="Kim E."/>
            <person name="Marx C."/>
            <person name="Richardson P."/>
        </authorList>
    </citation>
    <scope>NUCLEOTIDE SEQUENCE [LARGE SCALE GENOMIC DNA]</scope>
    <source>
        <strain>PA1</strain>
    </source>
</reference>
<gene>
    <name evidence="1" type="primary">ligA</name>
    <name type="ordered locus">Mext_4642</name>
</gene>
<proteinExistence type="inferred from homology"/>
<accession>A9VWA4</accession>
<comment type="function">
    <text evidence="1">DNA ligase that catalyzes the formation of phosphodiester linkages between 5'-phosphoryl and 3'-hydroxyl groups in double-stranded DNA using NAD as a coenzyme and as the energy source for the reaction. It is essential for DNA replication and repair of damaged DNA.</text>
</comment>
<comment type="catalytic activity">
    <reaction evidence="1">
        <text>NAD(+) + (deoxyribonucleotide)n-3'-hydroxyl + 5'-phospho-(deoxyribonucleotide)m = (deoxyribonucleotide)n+m + AMP + beta-nicotinamide D-nucleotide.</text>
        <dbReference type="EC" id="6.5.1.2"/>
    </reaction>
</comment>
<comment type="cofactor">
    <cofactor evidence="1">
        <name>Mg(2+)</name>
        <dbReference type="ChEBI" id="CHEBI:18420"/>
    </cofactor>
    <cofactor evidence="1">
        <name>Mn(2+)</name>
        <dbReference type="ChEBI" id="CHEBI:29035"/>
    </cofactor>
</comment>
<comment type="similarity">
    <text evidence="1">Belongs to the NAD-dependent DNA ligase family. LigA subfamily.</text>
</comment>